<proteinExistence type="inferred from homology"/>
<feature type="chain" id="PRO_0000268482" description="Bifunctional protein FolD 1">
    <location>
        <begin position="1"/>
        <end position="300"/>
    </location>
</feature>
<feature type="binding site" evidence="1">
    <location>
        <begin position="166"/>
        <end position="168"/>
    </location>
    <ligand>
        <name>NADP(+)</name>
        <dbReference type="ChEBI" id="CHEBI:58349"/>
    </ligand>
</feature>
<feature type="binding site" evidence="1">
    <location>
        <position position="191"/>
    </location>
    <ligand>
        <name>NADP(+)</name>
        <dbReference type="ChEBI" id="CHEBI:58349"/>
    </ligand>
</feature>
<feature type="binding site" evidence="1">
    <location>
        <position position="232"/>
    </location>
    <ligand>
        <name>NADP(+)</name>
        <dbReference type="ChEBI" id="CHEBI:58349"/>
    </ligand>
</feature>
<name>FOLD1_ROSDO</name>
<keyword id="KW-0028">Amino-acid biosynthesis</keyword>
<keyword id="KW-0368">Histidine biosynthesis</keyword>
<keyword id="KW-0378">Hydrolase</keyword>
<keyword id="KW-0486">Methionine biosynthesis</keyword>
<keyword id="KW-0511">Multifunctional enzyme</keyword>
<keyword id="KW-0521">NADP</keyword>
<keyword id="KW-0554">One-carbon metabolism</keyword>
<keyword id="KW-0560">Oxidoreductase</keyword>
<keyword id="KW-0658">Purine biosynthesis</keyword>
<keyword id="KW-1185">Reference proteome</keyword>
<sequence length="300" mass="31313">MSATLIDGKAFAARVRAQVAEHVTRLKADHGITPGLAVVLVGQDPASQVYVRSKGKQTTEVGMKSVEHKLDADTSETDLLAVVDQLNKDPDIHGILVQLPLPGHLDEDLVINSIAPEKDVDGFHISNVGLLGTGQKSMVPCTPLGCLMMLRDYHGSLLGMDAVVVGRSNIVGKPMAQLLLGDSCTVTIAHSRTKDLADVVRRADIVVAAVGRPEMVPGDWIKPGATVIDVGINRLDAPEKGEGKTRLVGDVDFDSCAAVAGAITPVPGGVGPMTIACLLANTVTACCRANGLEEPEGLTA</sequence>
<protein>
    <recommendedName>
        <fullName evidence="1">Bifunctional protein FolD 1</fullName>
    </recommendedName>
    <domain>
        <recommendedName>
            <fullName evidence="1">Methylenetetrahydrofolate dehydrogenase</fullName>
            <ecNumber evidence="1">1.5.1.5</ecNumber>
        </recommendedName>
    </domain>
    <domain>
        <recommendedName>
            <fullName evidence="1">Methenyltetrahydrofolate cyclohydrolase</fullName>
            <ecNumber evidence="1">3.5.4.9</ecNumber>
        </recommendedName>
    </domain>
</protein>
<dbReference type="EC" id="1.5.1.5" evidence="1"/>
<dbReference type="EC" id="3.5.4.9" evidence="1"/>
<dbReference type="EMBL" id="CP000362">
    <property type="protein sequence ID" value="ABG31704.1"/>
    <property type="molecule type" value="Genomic_DNA"/>
</dbReference>
<dbReference type="RefSeq" id="WP_011568321.1">
    <property type="nucleotide sequence ID" value="NC_008209.1"/>
</dbReference>
<dbReference type="SMR" id="Q167Y9"/>
<dbReference type="STRING" id="375451.RD1_2105"/>
<dbReference type="KEGG" id="rde:RD1_2105"/>
<dbReference type="eggNOG" id="COG0190">
    <property type="taxonomic scope" value="Bacteria"/>
</dbReference>
<dbReference type="HOGENOM" id="CLU_034045_2_1_5"/>
<dbReference type="OrthoDB" id="9803580at2"/>
<dbReference type="UniPathway" id="UPA00193"/>
<dbReference type="Proteomes" id="UP000007029">
    <property type="component" value="Chromosome"/>
</dbReference>
<dbReference type="GO" id="GO:0005829">
    <property type="term" value="C:cytosol"/>
    <property type="evidence" value="ECO:0007669"/>
    <property type="project" value="TreeGrafter"/>
</dbReference>
<dbReference type="GO" id="GO:0004477">
    <property type="term" value="F:methenyltetrahydrofolate cyclohydrolase activity"/>
    <property type="evidence" value="ECO:0007669"/>
    <property type="project" value="UniProtKB-UniRule"/>
</dbReference>
<dbReference type="GO" id="GO:0004488">
    <property type="term" value="F:methylenetetrahydrofolate dehydrogenase (NADP+) activity"/>
    <property type="evidence" value="ECO:0007669"/>
    <property type="project" value="UniProtKB-UniRule"/>
</dbReference>
<dbReference type="GO" id="GO:0000105">
    <property type="term" value="P:L-histidine biosynthetic process"/>
    <property type="evidence" value="ECO:0007669"/>
    <property type="project" value="UniProtKB-KW"/>
</dbReference>
<dbReference type="GO" id="GO:0009086">
    <property type="term" value="P:methionine biosynthetic process"/>
    <property type="evidence" value="ECO:0007669"/>
    <property type="project" value="UniProtKB-KW"/>
</dbReference>
<dbReference type="GO" id="GO:0006164">
    <property type="term" value="P:purine nucleotide biosynthetic process"/>
    <property type="evidence" value="ECO:0007669"/>
    <property type="project" value="UniProtKB-KW"/>
</dbReference>
<dbReference type="GO" id="GO:0035999">
    <property type="term" value="P:tetrahydrofolate interconversion"/>
    <property type="evidence" value="ECO:0007669"/>
    <property type="project" value="UniProtKB-UniRule"/>
</dbReference>
<dbReference type="CDD" id="cd01080">
    <property type="entry name" value="NAD_bind_m-THF_DH_Cyclohyd"/>
    <property type="match status" value="1"/>
</dbReference>
<dbReference type="FunFam" id="3.40.50.720:FF:000006">
    <property type="entry name" value="Bifunctional protein FolD"/>
    <property type="match status" value="1"/>
</dbReference>
<dbReference type="FunFam" id="3.40.50.10860:FF:000005">
    <property type="entry name" value="C-1-tetrahydrofolate synthase, cytoplasmic, putative"/>
    <property type="match status" value="1"/>
</dbReference>
<dbReference type="Gene3D" id="3.40.50.10860">
    <property type="entry name" value="Leucine Dehydrogenase, chain A, domain 1"/>
    <property type="match status" value="1"/>
</dbReference>
<dbReference type="Gene3D" id="3.40.50.720">
    <property type="entry name" value="NAD(P)-binding Rossmann-like Domain"/>
    <property type="match status" value="1"/>
</dbReference>
<dbReference type="HAMAP" id="MF_01576">
    <property type="entry name" value="THF_DHG_CYH"/>
    <property type="match status" value="1"/>
</dbReference>
<dbReference type="InterPro" id="IPR046346">
    <property type="entry name" value="Aminoacid_DH-like_N_sf"/>
</dbReference>
<dbReference type="InterPro" id="IPR036291">
    <property type="entry name" value="NAD(P)-bd_dom_sf"/>
</dbReference>
<dbReference type="InterPro" id="IPR000672">
    <property type="entry name" value="THF_DH/CycHdrlase"/>
</dbReference>
<dbReference type="InterPro" id="IPR020630">
    <property type="entry name" value="THF_DH/CycHdrlase_cat_dom"/>
</dbReference>
<dbReference type="InterPro" id="IPR020867">
    <property type="entry name" value="THF_DH/CycHdrlase_CS"/>
</dbReference>
<dbReference type="InterPro" id="IPR020631">
    <property type="entry name" value="THF_DH/CycHdrlase_NAD-bd_dom"/>
</dbReference>
<dbReference type="NCBIfam" id="NF008058">
    <property type="entry name" value="PRK10792.1"/>
    <property type="match status" value="1"/>
</dbReference>
<dbReference type="NCBIfam" id="NF010783">
    <property type="entry name" value="PRK14186.1"/>
    <property type="match status" value="1"/>
</dbReference>
<dbReference type="NCBIfam" id="NF010785">
    <property type="entry name" value="PRK14188.1"/>
    <property type="match status" value="1"/>
</dbReference>
<dbReference type="PANTHER" id="PTHR48099:SF5">
    <property type="entry name" value="C-1-TETRAHYDROFOLATE SYNTHASE, CYTOPLASMIC"/>
    <property type="match status" value="1"/>
</dbReference>
<dbReference type="PANTHER" id="PTHR48099">
    <property type="entry name" value="C-1-TETRAHYDROFOLATE SYNTHASE, CYTOPLASMIC-RELATED"/>
    <property type="match status" value="1"/>
</dbReference>
<dbReference type="Pfam" id="PF00763">
    <property type="entry name" value="THF_DHG_CYH"/>
    <property type="match status" value="1"/>
</dbReference>
<dbReference type="Pfam" id="PF02882">
    <property type="entry name" value="THF_DHG_CYH_C"/>
    <property type="match status" value="1"/>
</dbReference>
<dbReference type="PRINTS" id="PR00085">
    <property type="entry name" value="THFDHDRGNASE"/>
</dbReference>
<dbReference type="SUPFAM" id="SSF53223">
    <property type="entry name" value="Aminoacid dehydrogenase-like, N-terminal domain"/>
    <property type="match status" value="1"/>
</dbReference>
<dbReference type="SUPFAM" id="SSF51735">
    <property type="entry name" value="NAD(P)-binding Rossmann-fold domains"/>
    <property type="match status" value="1"/>
</dbReference>
<dbReference type="PROSITE" id="PS00766">
    <property type="entry name" value="THF_DHG_CYH_1"/>
    <property type="match status" value="1"/>
</dbReference>
<dbReference type="PROSITE" id="PS00767">
    <property type="entry name" value="THF_DHG_CYH_2"/>
    <property type="match status" value="1"/>
</dbReference>
<accession>Q167Y9</accession>
<comment type="function">
    <text evidence="1">Catalyzes the oxidation of 5,10-methylenetetrahydrofolate to 5,10-methenyltetrahydrofolate and then the hydrolysis of 5,10-methenyltetrahydrofolate to 10-formyltetrahydrofolate.</text>
</comment>
<comment type="catalytic activity">
    <reaction evidence="1">
        <text>(6R)-5,10-methylene-5,6,7,8-tetrahydrofolate + NADP(+) = (6R)-5,10-methenyltetrahydrofolate + NADPH</text>
        <dbReference type="Rhea" id="RHEA:22812"/>
        <dbReference type="ChEBI" id="CHEBI:15636"/>
        <dbReference type="ChEBI" id="CHEBI:57455"/>
        <dbReference type="ChEBI" id="CHEBI:57783"/>
        <dbReference type="ChEBI" id="CHEBI:58349"/>
        <dbReference type="EC" id="1.5.1.5"/>
    </reaction>
</comment>
<comment type="catalytic activity">
    <reaction evidence="1">
        <text>(6R)-5,10-methenyltetrahydrofolate + H2O = (6R)-10-formyltetrahydrofolate + H(+)</text>
        <dbReference type="Rhea" id="RHEA:23700"/>
        <dbReference type="ChEBI" id="CHEBI:15377"/>
        <dbReference type="ChEBI" id="CHEBI:15378"/>
        <dbReference type="ChEBI" id="CHEBI:57455"/>
        <dbReference type="ChEBI" id="CHEBI:195366"/>
        <dbReference type="EC" id="3.5.4.9"/>
    </reaction>
</comment>
<comment type="pathway">
    <text evidence="1">One-carbon metabolism; tetrahydrofolate interconversion.</text>
</comment>
<comment type="subunit">
    <text evidence="1">Homodimer.</text>
</comment>
<comment type="similarity">
    <text evidence="1">Belongs to the tetrahydrofolate dehydrogenase/cyclohydrolase family.</text>
</comment>
<organism>
    <name type="scientific">Roseobacter denitrificans (strain ATCC 33942 / OCh 114)</name>
    <name type="common">Erythrobacter sp. (strain OCh 114)</name>
    <name type="synonym">Roseobacter denitrificans</name>
    <dbReference type="NCBI Taxonomy" id="375451"/>
    <lineage>
        <taxon>Bacteria</taxon>
        <taxon>Pseudomonadati</taxon>
        <taxon>Pseudomonadota</taxon>
        <taxon>Alphaproteobacteria</taxon>
        <taxon>Rhodobacterales</taxon>
        <taxon>Roseobacteraceae</taxon>
        <taxon>Roseobacter</taxon>
    </lineage>
</organism>
<reference key="1">
    <citation type="journal article" date="2007" name="J. Bacteriol.">
        <title>The complete genome sequence of Roseobacter denitrificans reveals a mixotrophic rather than photosynthetic metabolism.</title>
        <authorList>
            <person name="Swingley W.D."/>
            <person name="Sadekar S."/>
            <person name="Mastrian S.D."/>
            <person name="Matthies H.J."/>
            <person name="Hao J."/>
            <person name="Ramos H."/>
            <person name="Acharya C.R."/>
            <person name="Conrad A.L."/>
            <person name="Taylor H.L."/>
            <person name="Dejesa L.C."/>
            <person name="Shah M.K."/>
            <person name="O'Huallachain M.E."/>
            <person name="Lince M.T."/>
            <person name="Blankenship R.E."/>
            <person name="Beatty J.T."/>
            <person name="Touchman J.W."/>
        </authorList>
    </citation>
    <scope>NUCLEOTIDE SEQUENCE [LARGE SCALE GENOMIC DNA]</scope>
    <source>
        <strain>ATCC 33942 / OCh 114</strain>
    </source>
</reference>
<gene>
    <name evidence="1" type="primary">folD1</name>
    <name type="ordered locus">RD1_2105</name>
</gene>
<evidence type="ECO:0000255" key="1">
    <source>
        <dbReference type="HAMAP-Rule" id="MF_01576"/>
    </source>
</evidence>